<evidence type="ECO:0000255" key="1">
    <source>
        <dbReference type="HAMAP-Rule" id="MF_01310"/>
    </source>
</evidence>
<evidence type="ECO:0000305" key="2"/>
<accession>A6MW21</accession>
<sequence>MARQIKRAANKKKKTAPTGVAHIQSTFNNTIVTITTVTGETVSWASSGAIGFKGAKKGTPFAAQIAAEKASKEAMSQGMKKAEVLVNGPGAGRETAVRALQAAGLEITLIRDITPVPHNGCRPPKKRRV</sequence>
<organism>
    <name type="scientific">Rhodomonas salina</name>
    <name type="common">Cryptomonas salina</name>
    <dbReference type="NCBI Taxonomy" id="52970"/>
    <lineage>
        <taxon>Eukaryota</taxon>
        <taxon>Cryptophyceae</taxon>
        <taxon>Pyrenomonadales</taxon>
        <taxon>Pyrenomonadaceae</taxon>
        <taxon>Rhodomonas</taxon>
    </lineage>
</organism>
<geneLocation type="chloroplast"/>
<name>RR11_RHDSA</name>
<proteinExistence type="inferred from homology"/>
<comment type="subunit">
    <text evidence="1">Part of the 30S ribosomal subunit.</text>
</comment>
<comment type="subcellular location">
    <subcellularLocation>
        <location>Plastid</location>
        <location>Chloroplast</location>
    </subcellularLocation>
</comment>
<comment type="similarity">
    <text evidence="1">Belongs to the universal ribosomal protein uS11 family.</text>
</comment>
<gene>
    <name evidence="1" type="primary">rps11</name>
</gene>
<dbReference type="EMBL" id="EF508371">
    <property type="protein sequence ID" value="ABO70784.1"/>
    <property type="molecule type" value="Genomic_DNA"/>
</dbReference>
<dbReference type="RefSeq" id="YP_001293600.1">
    <property type="nucleotide sequence ID" value="NC_009573.1"/>
</dbReference>
<dbReference type="SMR" id="A6MW21"/>
<dbReference type="GeneID" id="5228509"/>
<dbReference type="GO" id="GO:0009507">
    <property type="term" value="C:chloroplast"/>
    <property type="evidence" value="ECO:0007669"/>
    <property type="project" value="UniProtKB-SubCell"/>
</dbReference>
<dbReference type="GO" id="GO:1990904">
    <property type="term" value="C:ribonucleoprotein complex"/>
    <property type="evidence" value="ECO:0007669"/>
    <property type="project" value="UniProtKB-KW"/>
</dbReference>
<dbReference type="GO" id="GO:0005840">
    <property type="term" value="C:ribosome"/>
    <property type="evidence" value="ECO:0007669"/>
    <property type="project" value="UniProtKB-KW"/>
</dbReference>
<dbReference type="GO" id="GO:0019843">
    <property type="term" value="F:rRNA binding"/>
    <property type="evidence" value="ECO:0007669"/>
    <property type="project" value="UniProtKB-UniRule"/>
</dbReference>
<dbReference type="GO" id="GO:0003735">
    <property type="term" value="F:structural constituent of ribosome"/>
    <property type="evidence" value="ECO:0007669"/>
    <property type="project" value="InterPro"/>
</dbReference>
<dbReference type="GO" id="GO:0006412">
    <property type="term" value="P:translation"/>
    <property type="evidence" value="ECO:0007669"/>
    <property type="project" value="UniProtKB-UniRule"/>
</dbReference>
<dbReference type="FunFam" id="3.30.420.80:FF:000001">
    <property type="entry name" value="30S ribosomal protein S11"/>
    <property type="match status" value="1"/>
</dbReference>
<dbReference type="Gene3D" id="3.30.420.80">
    <property type="entry name" value="Ribosomal protein S11"/>
    <property type="match status" value="1"/>
</dbReference>
<dbReference type="HAMAP" id="MF_01310">
    <property type="entry name" value="Ribosomal_uS11"/>
    <property type="match status" value="1"/>
</dbReference>
<dbReference type="InterPro" id="IPR001971">
    <property type="entry name" value="Ribosomal_uS11"/>
</dbReference>
<dbReference type="InterPro" id="IPR019981">
    <property type="entry name" value="Ribosomal_uS11_bac-type"/>
</dbReference>
<dbReference type="InterPro" id="IPR018102">
    <property type="entry name" value="Ribosomal_uS11_CS"/>
</dbReference>
<dbReference type="InterPro" id="IPR036967">
    <property type="entry name" value="Ribosomal_uS11_sf"/>
</dbReference>
<dbReference type="NCBIfam" id="NF003698">
    <property type="entry name" value="PRK05309.1"/>
    <property type="match status" value="1"/>
</dbReference>
<dbReference type="NCBIfam" id="TIGR03632">
    <property type="entry name" value="uS11_bact"/>
    <property type="match status" value="1"/>
</dbReference>
<dbReference type="PANTHER" id="PTHR11759">
    <property type="entry name" value="40S RIBOSOMAL PROTEIN S14/30S RIBOSOMAL PROTEIN S11"/>
    <property type="match status" value="1"/>
</dbReference>
<dbReference type="Pfam" id="PF00411">
    <property type="entry name" value="Ribosomal_S11"/>
    <property type="match status" value="1"/>
</dbReference>
<dbReference type="PIRSF" id="PIRSF002131">
    <property type="entry name" value="Ribosomal_S11"/>
    <property type="match status" value="1"/>
</dbReference>
<dbReference type="SUPFAM" id="SSF53137">
    <property type="entry name" value="Translational machinery components"/>
    <property type="match status" value="1"/>
</dbReference>
<dbReference type="PROSITE" id="PS00054">
    <property type="entry name" value="RIBOSOMAL_S11"/>
    <property type="match status" value="1"/>
</dbReference>
<feature type="chain" id="PRO_0000323370" description="Small ribosomal subunit protein uS11c">
    <location>
        <begin position="1"/>
        <end position="129"/>
    </location>
</feature>
<reference key="1">
    <citation type="journal article" date="2007" name="Mol. Biol. Evol.">
        <title>Plastid genome sequence of the cryptophyte alga Rhodomonas salina CCMP1319: lateral transfer of putative DNA replication machinery and a test of chromist plastid phylogeny.</title>
        <authorList>
            <person name="Khan H."/>
            <person name="Parks N."/>
            <person name="Kozera C."/>
            <person name="Curtis B.A."/>
            <person name="Parsons B.J."/>
            <person name="Bowman S."/>
            <person name="Archibald J.M."/>
        </authorList>
    </citation>
    <scope>NUCLEOTIDE SEQUENCE [LARGE SCALE GENOMIC DNA]</scope>
    <source>
        <strain>CCMP1319 / NEPCC76 / CS-174</strain>
    </source>
</reference>
<protein>
    <recommendedName>
        <fullName evidence="1">Small ribosomal subunit protein uS11c</fullName>
    </recommendedName>
    <alternativeName>
        <fullName evidence="2">30S ribosomal protein S11, chloroplastic</fullName>
    </alternativeName>
</protein>
<keyword id="KW-0150">Chloroplast</keyword>
<keyword id="KW-0934">Plastid</keyword>
<keyword id="KW-0687">Ribonucleoprotein</keyword>
<keyword id="KW-0689">Ribosomal protein</keyword>
<keyword id="KW-0694">RNA-binding</keyword>
<keyword id="KW-0699">rRNA-binding</keyword>